<name>OSBL8_MOUSE</name>
<feature type="chain" id="PRO_0000434121" description="Oxysterol-binding protein-related protein 8">
    <location>
        <begin position="1"/>
        <end position="889"/>
    </location>
</feature>
<feature type="transmembrane region" description="Helical" evidence="3">
    <location>
        <begin position="871"/>
        <end position="888"/>
    </location>
</feature>
<feature type="domain" description="PH" evidence="4">
    <location>
        <begin position="148"/>
        <end position="265"/>
    </location>
</feature>
<feature type="region of interest" description="Disordered" evidence="5">
    <location>
        <begin position="1"/>
        <end position="129"/>
    </location>
</feature>
<feature type="region of interest" description="Disordered" evidence="5">
    <location>
        <begin position="321"/>
        <end position="374"/>
    </location>
</feature>
<feature type="region of interest" description="Disordered" evidence="5">
    <location>
        <begin position="772"/>
        <end position="823"/>
    </location>
</feature>
<feature type="compositionally biased region" description="Polar residues" evidence="5">
    <location>
        <begin position="62"/>
        <end position="71"/>
    </location>
</feature>
<feature type="compositionally biased region" description="Basic and acidic residues" evidence="5">
    <location>
        <begin position="73"/>
        <end position="88"/>
    </location>
</feature>
<feature type="compositionally biased region" description="Basic and acidic residues" evidence="5">
    <location>
        <begin position="95"/>
        <end position="109"/>
    </location>
</feature>
<feature type="compositionally biased region" description="Basic and acidic residues" evidence="5">
    <location>
        <begin position="116"/>
        <end position="129"/>
    </location>
</feature>
<feature type="compositionally biased region" description="Basic and acidic residues" evidence="5">
    <location>
        <begin position="321"/>
        <end position="336"/>
    </location>
</feature>
<feature type="compositionally biased region" description="Basic and acidic residues" evidence="5">
    <location>
        <begin position="346"/>
        <end position="363"/>
    </location>
</feature>
<feature type="compositionally biased region" description="Basic residues" evidence="5">
    <location>
        <begin position="781"/>
        <end position="794"/>
    </location>
</feature>
<feature type="compositionally biased region" description="Polar residues" evidence="5">
    <location>
        <begin position="805"/>
        <end position="817"/>
    </location>
</feature>
<feature type="binding site" evidence="1">
    <location>
        <begin position="420"/>
        <end position="425"/>
    </location>
    <ligand>
        <name>a 1,2-diacyl-sn-glycero-3-phospho-(1D-myo-inositol 4-phosphate)</name>
        <dbReference type="ChEBI" id="CHEBI:58178"/>
    </ligand>
</feature>
<feature type="binding site" evidence="1">
    <location>
        <begin position="420"/>
        <end position="425"/>
    </location>
    <ligand>
        <name>a 1,2-diacyl-sn-glycero-3-phospho-L-serine</name>
        <dbReference type="ChEBI" id="CHEBI:57262"/>
    </ligand>
</feature>
<feature type="binding site" evidence="1">
    <location>
        <begin position="482"/>
        <end position="485"/>
    </location>
    <ligand>
        <name>a 1,2-diacyl-sn-glycero-3-phospho-(1D-myo-inositol 4-phosphate)</name>
        <dbReference type="ChEBI" id="CHEBI:58178"/>
    </ligand>
</feature>
<feature type="binding site" evidence="1">
    <location>
        <position position="485"/>
    </location>
    <ligand>
        <name>a 1,2-diacyl-sn-glycero-3-phospho-L-serine</name>
        <dbReference type="ChEBI" id="CHEBI:57262"/>
    </ligand>
</feature>
<feature type="binding site" evidence="1">
    <location>
        <begin position="514"/>
        <end position="515"/>
    </location>
    <ligand>
        <name>a 1,2-diacyl-sn-glycero-3-phospho-(1D-myo-inositol 4-phosphate)</name>
        <dbReference type="ChEBI" id="CHEBI:58178"/>
    </ligand>
</feature>
<feature type="binding site" evidence="1">
    <location>
        <position position="540"/>
    </location>
    <ligand>
        <name>a 1,2-diacyl-sn-glycero-3-phospho-L-serine</name>
        <dbReference type="ChEBI" id="CHEBI:57262"/>
    </ligand>
</feature>
<feature type="binding site" evidence="1">
    <location>
        <position position="706"/>
    </location>
    <ligand>
        <name>a 1,2-diacyl-sn-glycero-3-phospho-(1D-myo-inositol 4-phosphate)</name>
        <dbReference type="ChEBI" id="CHEBI:58178"/>
    </ligand>
</feature>
<feature type="binding site" evidence="1">
    <location>
        <position position="710"/>
    </location>
    <ligand>
        <name>a 1,2-diacyl-sn-glycero-3-phospho-(1D-myo-inositol 4-phosphate)</name>
        <dbReference type="ChEBI" id="CHEBI:58178"/>
    </ligand>
</feature>
<feature type="binding site" evidence="1">
    <location>
        <position position="714"/>
    </location>
    <ligand>
        <name>a 1,2-diacyl-sn-glycero-3-phospho-(1D-myo-inositol 4-phosphate)</name>
        <dbReference type="ChEBI" id="CHEBI:58178"/>
    </ligand>
</feature>
<feature type="modified residue" description="N-acetylmethionine" evidence="2">
    <location>
        <position position="1"/>
    </location>
</feature>
<feature type="modified residue" description="Phosphoserine" evidence="2">
    <location>
        <position position="14"/>
    </location>
</feature>
<feature type="modified residue" description="Phosphoserine" evidence="2">
    <location>
        <position position="65"/>
    </location>
</feature>
<feature type="modified residue" description="Phosphoserine" evidence="2">
    <location>
        <position position="68"/>
    </location>
</feature>
<feature type="modified residue" description="Phosphoserine" evidence="12">
    <location>
        <position position="314"/>
    </location>
</feature>
<feature type="modified residue" description="Phosphoserine" evidence="2">
    <location>
        <position position="328"/>
    </location>
</feature>
<feature type="modified residue" description="Phosphoserine" evidence="2">
    <location>
        <position position="342"/>
    </location>
</feature>
<feature type="modified residue" description="Phosphoserine" evidence="12">
    <location>
        <position position="807"/>
    </location>
</feature>
<feature type="modified residue" description="Phosphoserine" evidence="12">
    <location>
        <position position="808"/>
    </location>
</feature>
<feature type="modified residue" description="Phosphoserine" evidence="12">
    <location>
        <position position="810"/>
    </location>
</feature>
<feature type="modified residue" description="Phosphoserine" evidence="12">
    <location>
        <position position="814"/>
    </location>
</feature>
<gene>
    <name evidence="11" type="primary">Osbpl8</name>
    <name evidence="9" type="synonym">Kiaa1451</name>
    <name type="synonym">Orp8</name>
</gene>
<keyword id="KW-0007">Acetylation</keyword>
<keyword id="KW-0256">Endoplasmic reticulum</keyword>
<keyword id="KW-0445">Lipid transport</keyword>
<keyword id="KW-0446">Lipid-binding</keyword>
<keyword id="KW-0472">Membrane</keyword>
<keyword id="KW-0539">Nucleus</keyword>
<keyword id="KW-0597">Phosphoprotein</keyword>
<keyword id="KW-1185">Reference proteome</keyword>
<keyword id="KW-0812">Transmembrane</keyword>
<keyword id="KW-1133">Transmembrane helix</keyword>
<keyword id="KW-0813">Transport</keyword>
<dbReference type="EMBL" id="AC121871">
    <property type="status" value="NOT_ANNOTATED_CDS"/>
    <property type="molecule type" value="Genomic_DNA"/>
</dbReference>
<dbReference type="EMBL" id="AC124399">
    <property type="status" value="NOT_ANNOTATED_CDS"/>
    <property type="molecule type" value="Genomic_DNA"/>
</dbReference>
<dbReference type="EMBL" id="CH466539">
    <property type="protein sequence ID" value="EDL21721.1"/>
    <property type="molecule type" value="Genomic_DNA"/>
</dbReference>
<dbReference type="EMBL" id="CH466539">
    <property type="protein sequence ID" value="EDL21722.1"/>
    <property type="status" value="ALT_SEQ"/>
    <property type="molecule type" value="Genomic_DNA"/>
</dbReference>
<dbReference type="EMBL" id="BC141383">
    <property type="protein sequence ID" value="AAI41384.1"/>
    <property type="molecule type" value="mRNA"/>
</dbReference>
<dbReference type="EMBL" id="AK173174">
    <property type="protein sequence ID" value="BAD32452.1"/>
    <property type="molecule type" value="mRNA"/>
</dbReference>
<dbReference type="CCDS" id="CCDS36056.1"/>
<dbReference type="RefSeq" id="NP_001003717.1">
    <property type="nucleotide sequence ID" value="NM_001003717.1"/>
</dbReference>
<dbReference type="RefSeq" id="NP_780698.2">
    <property type="nucleotide sequence ID" value="NM_175489.3"/>
</dbReference>
<dbReference type="RefSeq" id="XP_006513702.1">
    <property type="nucleotide sequence ID" value="XM_006513639.2"/>
</dbReference>
<dbReference type="BMRB" id="B9EJ86"/>
<dbReference type="SMR" id="B9EJ86"/>
<dbReference type="FunCoup" id="B9EJ86">
    <property type="interactions" value="4504"/>
</dbReference>
<dbReference type="STRING" id="10090.ENSMUSP00000100911"/>
<dbReference type="GlyGen" id="B9EJ86">
    <property type="glycosylation" value="1 site, 1 O-linked glycan (1 site)"/>
</dbReference>
<dbReference type="iPTMnet" id="B9EJ86"/>
<dbReference type="PhosphoSitePlus" id="B9EJ86"/>
<dbReference type="SwissPalm" id="B9EJ86"/>
<dbReference type="jPOST" id="B9EJ86"/>
<dbReference type="PaxDb" id="10090-ENSMUSP00000100911"/>
<dbReference type="PeptideAtlas" id="B9EJ86"/>
<dbReference type="ProteomicsDB" id="294115"/>
<dbReference type="Pumba" id="B9EJ86"/>
<dbReference type="Antibodypedia" id="680">
    <property type="antibodies" value="97 antibodies from 20 providers"/>
</dbReference>
<dbReference type="DNASU" id="237542"/>
<dbReference type="Ensembl" id="ENSMUST00000105275.9">
    <property type="protein sequence ID" value="ENSMUSP00000100911.2"/>
    <property type="gene ID" value="ENSMUSG00000020189.16"/>
</dbReference>
<dbReference type="GeneID" id="237542"/>
<dbReference type="KEGG" id="mmu:237542"/>
<dbReference type="UCSC" id="uc007gzy.1">
    <property type="organism name" value="mouse"/>
</dbReference>
<dbReference type="UCSC" id="uc007gzz.1">
    <property type="organism name" value="mouse"/>
</dbReference>
<dbReference type="AGR" id="MGI:2443807"/>
<dbReference type="CTD" id="114882"/>
<dbReference type="MGI" id="MGI:2443807">
    <property type="gene designation" value="Osbpl8"/>
</dbReference>
<dbReference type="VEuPathDB" id="HostDB:ENSMUSG00000020189"/>
<dbReference type="eggNOG" id="KOG2210">
    <property type="taxonomic scope" value="Eukaryota"/>
</dbReference>
<dbReference type="GeneTree" id="ENSGT00940000156622"/>
<dbReference type="InParanoid" id="B9EJ86"/>
<dbReference type="OrthoDB" id="10053431at2759"/>
<dbReference type="PhylomeDB" id="B9EJ86"/>
<dbReference type="TreeFam" id="TF312807"/>
<dbReference type="Reactome" id="R-MMU-1482801">
    <property type="pathway name" value="Acyl chain remodelling of PS"/>
</dbReference>
<dbReference type="BioGRID-ORCS" id="237542">
    <property type="hits" value="5 hits in 80 CRISPR screens"/>
</dbReference>
<dbReference type="ChiTaRS" id="Osbpl8">
    <property type="organism name" value="mouse"/>
</dbReference>
<dbReference type="PRO" id="PR:B9EJ86"/>
<dbReference type="Proteomes" id="UP000000589">
    <property type="component" value="Chromosome 10"/>
</dbReference>
<dbReference type="RNAct" id="B9EJ86">
    <property type="molecule type" value="protein"/>
</dbReference>
<dbReference type="Bgee" id="ENSMUSG00000020189">
    <property type="expression patterns" value="Expressed in olfactory tubercle and 227 other cell types or tissues"/>
</dbReference>
<dbReference type="ExpressionAtlas" id="B9EJ86">
    <property type="expression patterns" value="baseline and differential"/>
</dbReference>
<dbReference type="GO" id="GO:0005789">
    <property type="term" value="C:endoplasmic reticulum membrane"/>
    <property type="evidence" value="ECO:0007669"/>
    <property type="project" value="UniProtKB-SubCell"/>
</dbReference>
<dbReference type="GO" id="GO:0031965">
    <property type="term" value="C:nuclear membrane"/>
    <property type="evidence" value="ECO:0000315"/>
    <property type="project" value="MGI"/>
</dbReference>
<dbReference type="GO" id="GO:0015485">
    <property type="term" value="F:cholesterol binding"/>
    <property type="evidence" value="ECO:0007669"/>
    <property type="project" value="Ensembl"/>
</dbReference>
<dbReference type="GO" id="GO:0070273">
    <property type="term" value="F:phosphatidylinositol-4-phosphate binding"/>
    <property type="evidence" value="ECO:0000250"/>
    <property type="project" value="UniProtKB"/>
</dbReference>
<dbReference type="GO" id="GO:0001786">
    <property type="term" value="F:phosphatidylserine binding"/>
    <property type="evidence" value="ECO:0000250"/>
    <property type="project" value="UniProtKB"/>
</dbReference>
<dbReference type="GO" id="GO:0140343">
    <property type="term" value="F:phosphatidylserine transfer activity"/>
    <property type="evidence" value="ECO:0000250"/>
    <property type="project" value="UniProtKB"/>
</dbReference>
<dbReference type="GO" id="GO:0045444">
    <property type="term" value="P:fat cell differentiation"/>
    <property type="evidence" value="ECO:0007669"/>
    <property type="project" value="Ensembl"/>
</dbReference>
<dbReference type="GO" id="GO:0030336">
    <property type="term" value="P:negative regulation of cell migration"/>
    <property type="evidence" value="ECO:0000315"/>
    <property type="project" value="MGI"/>
</dbReference>
<dbReference type="GO" id="GO:0015914">
    <property type="term" value="P:phospholipid transport"/>
    <property type="evidence" value="ECO:0000250"/>
    <property type="project" value="UniProtKB"/>
</dbReference>
<dbReference type="GO" id="GO:0046326">
    <property type="term" value="P:positive regulation of D-glucose import"/>
    <property type="evidence" value="ECO:0000315"/>
    <property type="project" value="BHF-UCL"/>
</dbReference>
<dbReference type="GO" id="GO:0046628">
    <property type="term" value="P:positive regulation of insulin receptor signaling pathway"/>
    <property type="evidence" value="ECO:0000314"/>
    <property type="project" value="BHF-UCL"/>
</dbReference>
<dbReference type="GO" id="GO:0051897">
    <property type="term" value="P:positive regulation of phosphatidylinositol 3-kinase/protein kinase B signal transduction"/>
    <property type="evidence" value="ECO:0000315"/>
    <property type="project" value="BHF-UCL"/>
</dbReference>
<dbReference type="GO" id="GO:0090204">
    <property type="term" value="P:protein localization to nuclear pore"/>
    <property type="evidence" value="ECO:0000315"/>
    <property type="project" value="MGI"/>
</dbReference>
<dbReference type="GO" id="GO:0070328">
    <property type="term" value="P:triglyceride homeostasis"/>
    <property type="evidence" value="ECO:0007669"/>
    <property type="project" value="Ensembl"/>
</dbReference>
<dbReference type="CDD" id="cd13286">
    <property type="entry name" value="PH_OPR5_ORP8"/>
    <property type="match status" value="1"/>
</dbReference>
<dbReference type="FunFam" id="1.10.287.2720:FF:000002">
    <property type="entry name" value="Oxysterol-binding protein"/>
    <property type="match status" value="1"/>
</dbReference>
<dbReference type="FunFam" id="2.30.29.30:FF:000030">
    <property type="entry name" value="Oxysterol-binding protein"/>
    <property type="match status" value="1"/>
</dbReference>
<dbReference type="FunFam" id="2.40.160.120:FF:000020">
    <property type="entry name" value="Oxysterol-binding protein"/>
    <property type="match status" value="1"/>
</dbReference>
<dbReference type="FunFam" id="3.30.70.3490:FF:000005">
    <property type="entry name" value="Oxysterol-binding protein"/>
    <property type="match status" value="1"/>
</dbReference>
<dbReference type="Gene3D" id="1.10.287.2720">
    <property type="match status" value="1"/>
</dbReference>
<dbReference type="Gene3D" id="2.40.160.120">
    <property type="match status" value="1"/>
</dbReference>
<dbReference type="Gene3D" id="3.30.70.3490">
    <property type="match status" value="1"/>
</dbReference>
<dbReference type="Gene3D" id="2.30.29.30">
    <property type="entry name" value="Pleckstrin-homology domain (PH domain)/Phosphotyrosine-binding domain (PTB)"/>
    <property type="match status" value="1"/>
</dbReference>
<dbReference type="InterPro" id="IPR037239">
    <property type="entry name" value="OSBP_sf"/>
</dbReference>
<dbReference type="InterPro" id="IPR000648">
    <property type="entry name" value="Oxysterol-bd"/>
</dbReference>
<dbReference type="InterPro" id="IPR018494">
    <property type="entry name" value="Oxysterol-bd_CS"/>
</dbReference>
<dbReference type="InterPro" id="IPR011993">
    <property type="entry name" value="PH-like_dom_sf"/>
</dbReference>
<dbReference type="InterPro" id="IPR001849">
    <property type="entry name" value="PH_domain"/>
</dbReference>
<dbReference type="PANTHER" id="PTHR10972">
    <property type="entry name" value="OXYSTEROL-BINDING PROTEIN-RELATED"/>
    <property type="match status" value="1"/>
</dbReference>
<dbReference type="PANTHER" id="PTHR10972:SF216">
    <property type="entry name" value="OXYSTEROL-BINDING PROTEIN-RELATED PROTEIN 8"/>
    <property type="match status" value="1"/>
</dbReference>
<dbReference type="Pfam" id="PF01237">
    <property type="entry name" value="Oxysterol_BP"/>
    <property type="match status" value="1"/>
</dbReference>
<dbReference type="Pfam" id="PF00169">
    <property type="entry name" value="PH"/>
    <property type="match status" value="1"/>
</dbReference>
<dbReference type="SMART" id="SM00233">
    <property type="entry name" value="PH"/>
    <property type="match status" value="1"/>
</dbReference>
<dbReference type="SUPFAM" id="SSF144000">
    <property type="entry name" value="Oxysterol-binding protein-like"/>
    <property type="match status" value="1"/>
</dbReference>
<dbReference type="SUPFAM" id="SSF50729">
    <property type="entry name" value="PH domain-like"/>
    <property type="match status" value="1"/>
</dbReference>
<dbReference type="PROSITE" id="PS01013">
    <property type="entry name" value="OSBP"/>
    <property type="match status" value="1"/>
</dbReference>
<dbReference type="PROSITE" id="PS50003">
    <property type="entry name" value="PH_DOMAIN"/>
    <property type="match status" value="1"/>
</dbReference>
<sequence>MEAALADGEPDRSSLLGDSKDVLGPSTVVANSDEPQHLTPGKMSQRQGRDANPTPTRDLPQPSLSPASLHSQGFERGKEDISQNKDDSSLSMSKSKSESKLYNGSEKDSSTSSKLTKKESLKVQKKNYREEKKRATKELLSTITDPSVIVMADWLKIRGTLKSWTKLWCVLKPGVLLIYKTQKNGQWVGTVLLNACEIIERPSKKDGFCFKLFHPLEQSIWAVKGPKGEAVGSITQPLPSSYLIIRATSESDGRCWMDALELALKCSSLLKRTMVREGKEHDLSISSDSTHVTLYGLLRANNLHSGDNFQLNDSEIERQHFKDQDLYSDKSDKENDPEHDESDNEVLGKSEESDTDTSERQDDSYIDPEPVEPLKETTYMEQSHEELGEAGEASQTETVSEENKSLIWTLLKQVRPGMDLSRVVLPTFILEPRSFLDKLSDYYYHADFLSEAALEENPYFRLKKVVKWYLSGFYKKPKGLKKPYNPILGETFRCLWIHPRTNSKTFYIAEQVSHHPPISAFYVSNRKDGFCLSGSILAKSKFYGNSLSAILEGEARLTFLNRGEDYVMTMPYAHCKGILYGTMTLELGGTVNITCQKTGYSAILEFKLKPFLGSSDYVNQISGKLKLGKEVLATLEGHWDSEVFINDKKTDNSEIFWNPTPDIKQWRLIRHTVKFEEQDDFESEKLWQRVTKAINAKDQTEATQEKYVLEEAQRQAARDRKTKTQEWVCKLFELDPLTGEWHYKFSDTRPWDPLNDMIQFEKDGVIQTKVKHRTPMVSVPKMKHKPTRQQKKVVKGYSSPEPDIQDSSGSEAQSVKPSTRRKKGIDLGDIQSSIESIKQTQEEIKRNIMALRNHLLSSTPATDYFLQQKDYFVIFLLILLQVIINFIFK</sequence>
<accession>B9EJ86</accession>
<accession>G3X9N6</accession>
<accession>Q69ZJ4</accession>
<protein>
    <recommendedName>
        <fullName>Oxysterol-binding protein-related protein 8</fullName>
        <shortName>ORP-8</shortName>
        <shortName>OSBP-related protein 8</shortName>
    </recommendedName>
</protein>
<comment type="function">
    <text evidence="2">Lipid transporter involved in lipid countertransport between the endoplasmic reticulum and the plasma membrane: specifically exchanges phosphatidylserine with phosphatidylinositol 4-phosphate (PI4P), delivering phosphatidylserine to the plasma membrane in exchange for PI4P, which is degraded by the SAC1/SACM1L phosphatase in the endoplasmic reticulum. Binds phosphatidylserine and PI4P in a mutually exclusive manner. Binds oxysterol, 25-hydroxycholesterol and cholesterol.</text>
</comment>
<comment type="subunit">
    <text evidence="2">Interacts with SPAG5. Interacts with NUP62.</text>
</comment>
<comment type="subcellular location">
    <subcellularLocation>
        <location evidence="2">Endoplasmic reticulum membrane</location>
        <topology evidence="2">Single-pass membrane protein</topology>
    </subcellularLocation>
    <subcellularLocation>
        <location evidence="2">Nucleus membrane</location>
    </subcellularLocation>
    <text evidence="2">The presence of the N-terminus extension contains an overall negative charge that may explain the weak localization to the cortical endoplasmic reticulum.</text>
</comment>
<comment type="tissue specificity">
    <text evidence="6">Widely expressed. Most abundant in liver, spleen, kidney, brain and adipose tissue.</text>
</comment>
<comment type="disruption phenotype">
    <text evidence="7 8">Mice are apparently healthy and show no developmental defects nor gross abnormality of glucose or lipid metabolism. However, they display a significant elevation of plasma HDL cholesterol and phospholipid levels. They also show a modest increase of APOA1, plus a number of mild gender- or diet-specific lipid metabolism phenotypes (PubMed:23554939). Deletion in bone marrow-derived cells, including macrophages, reduces atherosclerotic lesion progression (PubMed:25347070).</text>
</comment>
<comment type="similarity">
    <text evidence="10">Belongs to the OSBP family.</text>
</comment>
<comment type="sequence caution" evidence="10">
    <conflict type="erroneous gene model prediction">
        <sequence resource="EMBL-CDS" id="EDL21722"/>
    </conflict>
</comment>
<organism>
    <name type="scientific">Mus musculus</name>
    <name type="common">Mouse</name>
    <dbReference type="NCBI Taxonomy" id="10090"/>
    <lineage>
        <taxon>Eukaryota</taxon>
        <taxon>Metazoa</taxon>
        <taxon>Chordata</taxon>
        <taxon>Craniata</taxon>
        <taxon>Vertebrata</taxon>
        <taxon>Euteleostomi</taxon>
        <taxon>Mammalia</taxon>
        <taxon>Eutheria</taxon>
        <taxon>Euarchontoglires</taxon>
        <taxon>Glires</taxon>
        <taxon>Rodentia</taxon>
        <taxon>Myomorpha</taxon>
        <taxon>Muroidea</taxon>
        <taxon>Muridae</taxon>
        <taxon>Murinae</taxon>
        <taxon>Mus</taxon>
        <taxon>Mus</taxon>
    </lineage>
</organism>
<evidence type="ECO:0000250" key="1">
    <source>
        <dbReference type="UniProtKB" id="Q02201"/>
    </source>
</evidence>
<evidence type="ECO:0000250" key="2">
    <source>
        <dbReference type="UniProtKB" id="Q9BZF1"/>
    </source>
</evidence>
<evidence type="ECO:0000255" key="3"/>
<evidence type="ECO:0000255" key="4">
    <source>
        <dbReference type="PROSITE-ProRule" id="PRU00145"/>
    </source>
</evidence>
<evidence type="ECO:0000256" key="5">
    <source>
        <dbReference type="SAM" id="MobiDB-lite"/>
    </source>
</evidence>
<evidence type="ECO:0000269" key="6">
    <source>
    </source>
</evidence>
<evidence type="ECO:0000269" key="7">
    <source>
    </source>
</evidence>
<evidence type="ECO:0000269" key="8">
    <source>
    </source>
</evidence>
<evidence type="ECO:0000303" key="9">
    <source>
    </source>
</evidence>
<evidence type="ECO:0000305" key="10"/>
<evidence type="ECO:0000312" key="11">
    <source>
        <dbReference type="MGI" id="MGI:2443807"/>
    </source>
</evidence>
<evidence type="ECO:0007744" key="12">
    <source>
    </source>
</evidence>
<reference key="1">
    <citation type="journal article" date="2009" name="PLoS Biol.">
        <title>Lineage-specific biology revealed by a finished genome assembly of the mouse.</title>
        <authorList>
            <person name="Church D.M."/>
            <person name="Goodstadt L."/>
            <person name="Hillier L.W."/>
            <person name="Zody M.C."/>
            <person name="Goldstein S."/>
            <person name="She X."/>
            <person name="Bult C.J."/>
            <person name="Agarwala R."/>
            <person name="Cherry J.L."/>
            <person name="DiCuccio M."/>
            <person name="Hlavina W."/>
            <person name="Kapustin Y."/>
            <person name="Meric P."/>
            <person name="Maglott D."/>
            <person name="Birtle Z."/>
            <person name="Marques A.C."/>
            <person name="Graves T."/>
            <person name="Zhou S."/>
            <person name="Teague B."/>
            <person name="Potamousis K."/>
            <person name="Churas C."/>
            <person name="Place M."/>
            <person name="Herschleb J."/>
            <person name="Runnheim R."/>
            <person name="Forrest D."/>
            <person name="Amos-Landgraf J."/>
            <person name="Schwartz D.C."/>
            <person name="Cheng Z."/>
            <person name="Lindblad-Toh K."/>
            <person name="Eichler E.E."/>
            <person name="Ponting C.P."/>
        </authorList>
    </citation>
    <scope>NUCLEOTIDE SEQUENCE [LARGE SCALE GENOMIC DNA]</scope>
    <source>
        <strain>C57BL/6J</strain>
    </source>
</reference>
<reference key="2">
    <citation type="submission" date="2005-07" db="EMBL/GenBank/DDBJ databases">
        <authorList>
            <person name="Mural R.J."/>
            <person name="Adams M.D."/>
            <person name="Myers E.W."/>
            <person name="Smith H.O."/>
            <person name="Venter J.C."/>
        </authorList>
    </citation>
    <scope>NUCLEOTIDE SEQUENCE [LARGE SCALE GENOMIC DNA]</scope>
</reference>
<reference key="3">
    <citation type="journal article" date="2004" name="Genome Res.">
        <title>The status, quality, and expansion of the NIH full-length cDNA project: the Mammalian Gene Collection (MGC).</title>
        <authorList>
            <consortium name="The MGC Project Team"/>
        </authorList>
    </citation>
    <scope>NUCLEOTIDE SEQUENCE [LARGE SCALE MRNA]</scope>
    <source>
        <tissue>Brain</tissue>
    </source>
</reference>
<reference key="4">
    <citation type="journal article" date="2004" name="DNA Res.">
        <title>Prediction of the coding sequences of mouse homologues of KIAA gene: IV. The complete nucleotide sequences of 500 mouse KIAA-homologous cDNAs identified by screening of terminal sequences of cDNA clones randomly sampled from size-fractionated libraries.</title>
        <authorList>
            <person name="Okazaki N."/>
            <person name="Kikuno R."/>
            <person name="Ohara R."/>
            <person name="Inamoto S."/>
            <person name="Koseki H."/>
            <person name="Hiraoka S."/>
            <person name="Saga Y."/>
            <person name="Seino S."/>
            <person name="Nishimura M."/>
            <person name="Kaisho T."/>
            <person name="Hoshino K."/>
            <person name="Kitamura H."/>
            <person name="Nagase T."/>
            <person name="Ohara O."/>
            <person name="Koga H."/>
        </authorList>
    </citation>
    <scope>NUCLEOTIDE SEQUENCE [LARGE SCALE MRNA] OF 461-889</scope>
    <source>
        <tissue>Thymus</tissue>
    </source>
</reference>
<reference key="5">
    <citation type="journal article" date="2007" name="Proc. Natl. Acad. Sci. U.S.A.">
        <title>Large-scale phosphorylation analysis of mouse liver.</title>
        <authorList>
            <person name="Villen J."/>
            <person name="Beausoleil S.A."/>
            <person name="Gerber S.A."/>
            <person name="Gygi S.P."/>
        </authorList>
    </citation>
    <scope>IDENTIFICATION BY MASS SPECTROMETRY [LARGE SCALE ANALYSIS]</scope>
    <source>
        <tissue>Liver</tissue>
    </source>
</reference>
<reference key="6">
    <citation type="journal article" date="2008" name="J. Biol. Chem.">
        <title>OSBP-related protein 8 (ORP8) suppresses ABCA1 expression and cholesterol efflux from macrophages.</title>
        <authorList>
            <person name="Yan D."/>
            <person name="Mayranpaa M.I."/>
            <person name="Wong J."/>
            <person name="Perttila J."/>
            <person name="Lehto M."/>
            <person name="Jauhiainen M."/>
            <person name="Kovanen P.T."/>
            <person name="Ehnholm C."/>
            <person name="Brown A.J."/>
            <person name="Olkkonen V.M."/>
        </authorList>
    </citation>
    <scope>TISSUE SPECIFICITY</scope>
</reference>
<reference key="7">
    <citation type="journal article" date="2009" name="Immunity">
        <title>The phagosomal proteome in interferon-gamma-activated macrophages.</title>
        <authorList>
            <person name="Trost M."/>
            <person name="English L."/>
            <person name="Lemieux S."/>
            <person name="Courcelles M."/>
            <person name="Desjardins M."/>
            <person name="Thibault P."/>
        </authorList>
    </citation>
    <scope>IDENTIFICATION BY MASS SPECTROMETRY [LARGE SCALE ANALYSIS]</scope>
</reference>
<reference key="8">
    <citation type="journal article" date="2010" name="Cell">
        <title>A tissue-specific atlas of mouse protein phosphorylation and expression.</title>
        <authorList>
            <person name="Huttlin E.L."/>
            <person name="Jedrychowski M.P."/>
            <person name="Elias J.E."/>
            <person name="Goswami T."/>
            <person name="Rad R."/>
            <person name="Beausoleil S.A."/>
            <person name="Villen J."/>
            <person name="Haas W."/>
            <person name="Sowa M.E."/>
            <person name="Gygi S.P."/>
        </authorList>
    </citation>
    <scope>PHOSPHORYLATION [LARGE SCALE ANALYSIS] AT SER-314; SER-807; SER-808; SER-810 AND SER-814</scope>
    <scope>IDENTIFICATION BY MASS SPECTROMETRY [LARGE SCALE ANALYSIS]</scope>
    <source>
        <tissue>Brain</tissue>
        <tissue>Brown adipose tissue</tissue>
        <tissue>Heart</tissue>
        <tissue>Kidney</tissue>
        <tissue>Liver</tissue>
        <tissue>Lung</tissue>
        <tissue>Pancreas</tissue>
        <tissue>Spleen</tissue>
        <tissue>Testis</tissue>
    </source>
</reference>
<reference key="9">
    <citation type="journal article" date="2013" name="PLoS ONE">
        <title>Osbpl8 deficiency in mouse causes an elevation of high-density lipoproteins and gender-specific alterations of lipid metabolism.</title>
        <authorList>
            <person name="Beaslas O."/>
            <person name="Metso J."/>
            <person name="Nissila E."/>
            <person name="Laurila P.P."/>
            <person name="Kaiharju E."/>
            <person name="Batchu K.C."/>
            <person name="Kaipiainen L."/>
            <person name="Mayranpaa M.I."/>
            <person name="Yan D."/>
            <person name="Gylling H."/>
            <person name="Jauhiainen M."/>
            <person name="Olkkonen V.M."/>
        </authorList>
    </citation>
    <scope>DISRUPTION PHENOTYPE</scope>
</reference>
<reference key="10">
    <citation type="journal article" date="2014" name="PLoS ONE">
        <title>Orp8 deficiency in bone marrow-derived cells reduces atherosclerotic lesion progression in LDL receptor knockout mice.</title>
        <authorList>
            <person name="van Kampen E."/>
            <person name="Beaslas O."/>
            <person name="Hildebrand R.B."/>
            <person name="Lammers B."/>
            <person name="Van Berkel T.J."/>
            <person name="Olkkonen V.M."/>
            <person name="Van Eck M."/>
        </authorList>
    </citation>
    <scope>DISRUPTION PHENOTYPE</scope>
</reference>
<proteinExistence type="evidence at protein level"/>